<keyword id="KW-0150">Chloroplast</keyword>
<keyword id="KW-0472">Membrane</keyword>
<keyword id="KW-0602">Photosynthesis</keyword>
<keyword id="KW-0934">Plastid</keyword>
<keyword id="KW-0677">Repeat</keyword>
<keyword id="KW-0793">Thylakoid</keyword>
<keyword id="KW-0802">TPR repeat</keyword>
<protein>
    <recommendedName>
        <fullName evidence="1">Photosystem I assembly protein Ycf3</fullName>
    </recommendedName>
</protein>
<sequence length="168" mass="19539">MPRSRITGNLIDKTFSIVANILLRIIPTTSGEKEAFTYYRDGMSAQSEGNYAEALQNYYEAMRLEIDPYDRSYILYNIGLIHTSNGEHTKALEYYFRALERNPFLPQAFNNMAVICHYRGEQAIRQGDSEIAEAWFDQAAEYWKQAIALTPGNYIEAQNWLKITRRFE</sequence>
<feature type="chain" id="PRO_0000275633" description="Photosystem I assembly protein Ycf3">
    <location>
        <begin position="1"/>
        <end position="168"/>
    </location>
</feature>
<feature type="repeat" description="TPR 1">
    <location>
        <begin position="35"/>
        <end position="68"/>
    </location>
</feature>
<feature type="repeat" description="TPR 2">
    <location>
        <begin position="72"/>
        <end position="105"/>
    </location>
</feature>
<feature type="repeat" description="TPR 3">
    <location>
        <begin position="120"/>
        <end position="153"/>
    </location>
</feature>
<evidence type="ECO:0000255" key="1">
    <source>
        <dbReference type="HAMAP-Rule" id="MF_00439"/>
    </source>
</evidence>
<accession>Q14FF6</accession>
<dbReference type="EMBL" id="AP008956">
    <property type="protein sequence ID" value="BAE97206.1"/>
    <property type="molecule type" value="Genomic_DNA"/>
</dbReference>
<dbReference type="RefSeq" id="YP_665559.1">
    <property type="nucleotide sequence ID" value="NC_008235.1"/>
</dbReference>
<dbReference type="SMR" id="Q14FF6"/>
<dbReference type="GeneID" id="4178153"/>
<dbReference type="KEGG" id="palz:4178153"/>
<dbReference type="OrthoDB" id="8044at3646"/>
<dbReference type="GO" id="GO:0009535">
    <property type="term" value="C:chloroplast thylakoid membrane"/>
    <property type="evidence" value="ECO:0007669"/>
    <property type="project" value="UniProtKB-SubCell"/>
</dbReference>
<dbReference type="GO" id="GO:0015979">
    <property type="term" value="P:photosynthesis"/>
    <property type="evidence" value="ECO:0007669"/>
    <property type="project" value="UniProtKB-UniRule"/>
</dbReference>
<dbReference type="FunFam" id="1.25.40.10:FF:000004">
    <property type="entry name" value="Photosystem I assembly protein Ycf3"/>
    <property type="match status" value="1"/>
</dbReference>
<dbReference type="Gene3D" id="1.25.40.10">
    <property type="entry name" value="Tetratricopeptide repeat domain"/>
    <property type="match status" value="1"/>
</dbReference>
<dbReference type="HAMAP" id="MF_00439">
    <property type="entry name" value="Ycf3"/>
    <property type="match status" value="1"/>
</dbReference>
<dbReference type="InterPro" id="IPR022818">
    <property type="entry name" value="PSI_Ycf3_assembly"/>
</dbReference>
<dbReference type="InterPro" id="IPR011990">
    <property type="entry name" value="TPR-like_helical_dom_sf"/>
</dbReference>
<dbReference type="InterPro" id="IPR019734">
    <property type="entry name" value="TPR_rpt"/>
</dbReference>
<dbReference type="InterPro" id="IPR051685">
    <property type="entry name" value="Ycf3/AcsC/BcsC/TPR_MFPF"/>
</dbReference>
<dbReference type="NCBIfam" id="NF002725">
    <property type="entry name" value="PRK02603.1"/>
    <property type="match status" value="1"/>
</dbReference>
<dbReference type="PANTHER" id="PTHR44943">
    <property type="entry name" value="CELLULOSE SYNTHASE OPERON PROTEIN C"/>
    <property type="match status" value="1"/>
</dbReference>
<dbReference type="PANTHER" id="PTHR44943:SF8">
    <property type="entry name" value="TPR REPEAT-CONTAINING PROTEIN MJ0263"/>
    <property type="match status" value="1"/>
</dbReference>
<dbReference type="Pfam" id="PF00515">
    <property type="entry name" value="TPR_1"/>
    <property type="match status" value="1"/>
</dbReference>
<dbReference type="SMART" id="SM00028">
    <property type="entry name" value="TPR"/>
    <property type="match status" value="3"/>
</dbReference>
<dbReference type="SUPFAM" id="SSF48452">
    <property type="entry name" value="TPR-like"/>
    <property type="match status" value="1"/>
</dbReference>
<dbReference type="PROSITE" id="PS50005">
    <property type="entry name" value="TPR"/>
    <property type="match status" value="3"/>
</dbReference>
<dbReference type="PROSITE" id="PS50293">
    <property type="entry name" value="TPR_REGION"/>
    <property type="match status" value="2"/>
</dbReference>
<gene>
    <name evidence="1" type="primary">ycf3</name>
</gene>
<reference key="1">
    <citation type="submission" date="2005-03" db="EMBL/GenBank/DDBJ databases">
        <title>Complete structure of the chloroplast genome of Populus alba.</title>
        <authorList>
            <person name="Okumura S."/>
            <person name="Yamashita A."/>
            <person name="Kanamoto H."/>
            <person name="Hattori M."/>
            <person name="Takase H."/>
            <person name="Tomizawa K."/>
        </authorList>
    </citation>
    <scope>NUCLEOTIDE SEQUENCE [LARGE SCALE GENOMIC DNA]</scope>
</reference>
<proteinExistence type="inferred from homology"/>
<geneLocation type="chloroplast"/>
<comment type="function">
    <text evidence="1">Essential for the assembly of the photosystem I (PSI) complex. May act as a chaperone-like factor to guide the assembly of the PSI subunits.</text>
</comment>
<comment type="subcellular location">
    <subcellularLocation>
        <location evidence="1">Plastid</location>
        <location evidence="1">Chloroplast thylakoid membrane</location>
        <topology evidence="1">Peripheral membrane protein</topology>
    </subcellularLocation>
</comment>
<comment type="similarity">
    <text evidence="1">Belongs to the Ycf3 family.</text>
</comment>
<organism>
    <name type="scientific">Populus alba</name>
    <name type="common">White poplar</name>
    <dbReference type="NCBI Taxonomy" id="43335"/>
    <lineage>
        <taxon>Eukaryota</taxon>
        <taxon>Viridiplantae</taxon>
        <taxon>Streptophyta</taxon>
        <taxon>Embryophyta</taxon>
        <taxon>Tracheophyta</taxon>
        <taxon>Spermatophyta</taxon>
        <taxon>Magnoliopsida</taxon>
        <taxon>eudicotyledons</taxon>
        <taxon>Gunneridae</taxon>
        <taxon>Pentapetalae</taxon>
        <taxon>rosids</taxon>
        <taxon>fabids</taxon>
        <taxon>Malpighiales</taxon>
        <taxon>Salicaceae</taxon>
        <taxon>Saliceae</taxon>
        <taxon>Populus</taxon>
    </lineage>
</organism>
<name>YCF3_POPAL</name>